<gene>
    <name evidence="1" type="primary">cysS</name>
    <name type="ordered locus">BAbS19_I06530</name>
</gene>
<accession>B2S4T7</accession>
<comment type="catalytic activity">
    <reaction evidence="1">
        <text>tRNA(Cys) + L-cysteine + ATP = L-cysteinyl-tRNA(Cys) + AMP + diphosphate</text>
        <dbReference type="Rhea" id="RHEA:17773"/>
        <dbReference type="Rhea" id="RHEA-COMP:9661"/>
        <dbReference type="Rhea" id="RHEA-COMP:9679"/>
        <dbReference type="ChEBI" id="CHEBI:30616"/>
        <dbReference type="ChEBI" id="CHEBI:33019"/>
        <dbReference type="ChEBI" id="CHEBI:35235"/>
        <dbReference type="ChEBI" id="CHEBI:78442"/>
        <dbReference type="ChEBI" id="CHEBI:78517"/>
        <dbReference type="ChEBI" id="CHEBI:456215"/>
        <dbReference type="EC" id="6.1.1.16"/>
    </reaction>
</comment>
<comment type="cofactor">
    <cofactor evidence="1">
        <name>Zn(2+)</name>
        <dbReference type="ChEBI" id="CHEBI:29105"/>
    </cofactor>
    <text evidence="1">Binds 1 zinc ion per subunit.</text>
</comment>
<comment type="subunit">
    <text evidence="1">Monomer.</text>
</comment>
<comment type="subcellular location">
    <subcellularLocation>
        <location evidence="1">Cytoplasm</location>
    </subcellularLocation>
</comment>
<comment type="similarity">
    <text evidence="1">Belongs to the class-I aminoacyl-tRNA synthetase family.</text>
</comment>
<organism>
    <name type="scientific">Brucella abortus (strain S19)</name>
    <dbReference type="NCBI Taxonomy" id="430066"/>
    <lineage>
        <taxon>Bacteria</taxon>
        <taxon>Pseudomonadati</taxon>
        <taxon>Pseudomonadota</taxon>
        <taxon>Alphaproteobacteria</taxon>
        <taxon>Hyphomicrobiales</taxon>
        <taxon>Brucellaceae</taxon>
        <taxon>Brucella/Ochrobactrum group</taxon>
        <taxon>Brucella</taxon>
    </lineage>
</organism>
<proteinExistence type="inferred from homology"/>
<protein>
    <recommendedName>
        <fullName evidence="1">Cysteine--tRNA ligase</fullName>
        <ecNumber evidence="1">6.1.1.16</ecNumber>
    </recommendedName>
    <alternativeName>
        <fullName evidence="1">Cysteinyl-tRNA synthetase</fullName>
        <shortName evidence="1">CysRS</shortName>
    </alternativeName>
</protein>
<keyword id="KW-0030">Aminoacyl-tRNA synthetase</keyword>
<keyword id="KW-0067">ATP-binding</keyword>
<keyword id="KW-0963">Cytoplasm</keyword>
<keyword id="KW-0436">Ligase</keyword>
<keyword id="KW-0479">Metal-binding</keyword>
<keyword id="KW-0547">Nucleotide-binding</keyword>
<keyword id="KW-0648">Protein biosynthesis</keyword>
<keyword id="KW-0862">Zinc</keyword>
<sequence>MPDTTPQLRLYNTLTRTKEAFAPIDAKNVRMYVCGPTVYDFAHIGNARPVIVFDVLFRLLRHVYGAQHVTYARNITDVDDKINARAARDYPDLPFNEAIRKVTESTNAQFQADVTALGNLQPTVQPRATEHMDEMRAMIDRLVQRGVAYVAQDHVLFSPSAMNARKGPRYGALARRSLDEMLAGARVDVASYKRDEMDFVLWKPSKKGEPGWPSPAGIETLGRPGWHIECSAMSMAKLLEPFGGGLKCDDPERNQFDIHGGGIDLVFPHHENEIAQSCCALGTERMANIWMHNGFLQVEGQKMSKSLGNFITIRDVLNDGLPQLGEWGDNTVRDHWAGLAARLSMLQTHYREPINWTAQRLAESADELHRWYGLLRDEGFGAPEKLSHASAVAAALCDDLNSWAAITALRQAFKVRDVAALGEGMALMGLLDPYFVTASDVPIFARADVDASAIAARIAERLNFINAKNWAEADRIRDELLQEGVQLKDSKDPATGERITTWDVVG</sequence>
<dbReference type="EC" id="6.1.1.16" evidence="1"/>
<dbReference type="EMBL" id="CP000887">
    <property type="protein sequence ID" value="ACD72184.1"/>
    <property type="molecule type" value="Genomic_DNA"/>
</dbReference>
<dbReference type="RefSeq" id="WP_002966736.1">
    <property type="nucleotide sequence ID" value="NC_010742.1"/>
</dbReference>
<dbReference type="SMR" id="B2S4T7"/>
<dbReference type="GeneID" id="93016919"/>
<dbReference type="KEGG" id="bmc:BAbS19_I06530"/>
<dbReference type="HOGENOM" id="CLU_013528_0_1_5"/>
<dbReference type="Proteomes" id="UP000002565">
    <property type="component" value="Chromosome 1"/>
</dbReference>
<dbReference type="GO" id="GO:0005829">
    <property type="term" value="C:cytosol"/>
    <property type="evidence" value="ECO:0007669"/>
    <property type="project" value="TreeGrafter"/>
</dbReference>
<dbReference type="GO" id="GO:0005524">
    <property type="term" value="F:ATP binding"/>
    <property type="evidence" value="ECO:0007669"/>
    <property type="project" value="UniProtKB-UniRule"/>
</dbReference>
<dbReference type="GO" id="GO:0004817">
    <property type="term" value="F:cysteine-tRNA ligase activity"/>
    <property type="evidence" value="ECO:0007669"/>
    <property type="project" value="UniProtKB-UniRule"/>
</dbReference>
<dbReference type="GO" id="GO:0008270">
    <property type="term" value="F:zinc ion binding"/>
    <property type="evidence" value="ECO:0007669"/>
    <property type="project" value="UniProtKB-UniRule"/>
</dbReference>
<dbReference type="GO" id="GO:0006423">
    <property type="term" value="P:cysteinyl-tRNA aminoacylation"/>
    <property type="evidence" value="ECO:0007669"/>
    <property type="project" value="UniProtKB-UniRule"/>
</dbReference>
<dbReference type="CDD" id="cd00672">
    <property type="entry name" value="CysRS_core"/>
    <property type="match status" value="1"/>
</dbReference>
<dbReference type="Gene3D" id="1.20.120.1910">
    <property type="entry name" value="Cysteine-tRNA ligase, C-terminal anti-codon recognition domain"/>
    <property type="match status" value="1"/>
</dbReference>
<dbReference type="Gene3D" id="3.40.50.620">
    <property type="entry name" value="HUPs"/>
    <property type="match status" value="1"/>
</dbReference>
<dbReference type="HAMAP" id="MF_00041">
    <property type="entry name" value="Cys_tRNA_synth"/>
    <property type="match status" value="1"/>
</dbReference>
<dbReference type="InterPro" id="IPR015803">
    <property type="entry name" value="Cys-tRNA-ligase"/>
</dbReference>
<dbReference type="InterPro" id="IPR024909">
    <property type="entry name" value="Cys-tRNA/MSH_ligase"/>
</dbReference>
<dbReference type="InterPro" id="IPR014729">
    <property type="entry name" value="Rossmann-like_a/b/a_fold"/>
</dbReference>
<dbReference type="InterPro" id="IPR032678">
    <property type="entry name" value="tRNA-synt_1_cat_dom"/>
</dbReference>
<dbReference type="InterPro" id="IPR009080">
    <property type="entry name" value="tRNAsynth_Ia_anticodon-bd"/>
</dbReference>
<dbReference type="NCBIfam" id="TIGR00435">
    <property type="entry name" value="cysS"/>
    <property type="match status" value="1"/>
</dbReference>
<dbReference type="PANTHER" id="PTHR10890:SF3">
    <property type="entry name" value="CYSTEINE--TRNA LIGASE, CYTOPLASMIC"/>
    <property type="match status" value="1"/>
</dbReference>
<dbReference type="PANTHER" id="PTHR10890">
    <property type="entry name" value="CYSTEINYL-TRNA SYNTHETASE"/>
    <property type="match status" value="1"/>
</dbReference>
<dbReference type="Pfam" id="PF01406">
    <property type="entry name" value="tRNA-synt_1e"/>
    <property type="match status" value="1"/>
</dbReference>
<dbReference type="PRINTS" id="PR00983">
    <property type="entry name" value="TRNASYNTHCYS"/>
</dbReference>
<dbReference type="SUPFAM" id="SSF47323">
    <property type="entry name" value="Anticodon-binding domain of a subclass of class I aminoacyl-tRNA synthetases"/>
    <property type="match status" value="1"/>
</dbReference>
<dbReference type="SUPFAM" id="SSF52374">
    <property type="entry name" value="Nucleotidylyl transferase"/>
    <property type="match status" value="1"/>
</dbReference>
<feature type="chain" id="PRO_1000090820" description="Cysteine--tRNA ligase">
    <location>
        <begin position="1"/>
        <end position="506"/>
    </location>
</feature>
<feature type="short sequence motif" description="'HIGH' region">
    <location>
        <begin position="36"/>
        <end position="46"/>
    </location>
</feature>
<feature type="short sequence motif" description="'KMSKS' region">
    <location>
        <begin position="302"/>
        <end position="306"/>
    </location>
</feature>
<feature type="binding site" evidence="1">
    <location>
        <position position="34"/>
    </location>
    <ligand>
        <name>Zn(2+)</name>
        <dbReference type="ChEBI" id="CHEBI:29105"/>
    </ligand>
</feature>
<feature type="binding site" evidence="1">
    <location>
        <position position="230"/>
    </location>
    <ligand>
        <name>Zn(2+)</name>
        <dbReference type="ChEBI" id="CHEBI:29105"/>
    </ligand>
</feature>
<feature type="binding site" evidence="1">
    <location>
        <position position="269"/>
    </location>
    <ligand>
        <name>Zn(2+)</name>
        <dbReference type="ChEBI" id="CHEBI:29105"/>
    </ligand>
</feature>
<feature type="binding site" evidence="1">
    <location>
        <position position="273"/>
    </location>
    <ligand>
        <name>Zn(2+)</name>
        <dbReference type="ChEBI" id="CHEBI:29105"/>
    </ligand>
</feature>
<feature type="binding site" evidence="1">
    <location>
        <position position="305"/>
    </location>
    <ligand>
        <name>ATP</name>
        <dbReference type="ChEBI" id="CHEBI:30616"/>
    </ligand>
</feature>
<name>SYC_BRUA1</name>
<reference key="1">
    <citation type="journal article" date="2008" name="PLoS ONE">
        <title>Genome sequence of Brucella abortus vaccine strain S19 compared to virulent strains yields candidate virulence genes.</title>
        <authorList>
            <person name="Crasta O.R."/>
            <person name="Folkerts O."/>
            <person name="Fei Z."/>
            <person name="Mane S.P."/>
            <person name="Evans C."/>
            <person name="Martino-Catt S."/>
            <person name="Bricker B."/>
            <person name="Yu G."/>
            <person name="Du L."/>
            <person name="Sobral B.W."/>
        </authorList>
    </citation>
    <scope>NUCLEOTIDE SEQUENCE [LARGE SCALE GENOMIC DNA]</scope>
    <source>
        <strain>S19</strain>
    </source>
</reference>
<evidence type="ECO:0000255" key="1">
    <source>
        <dbReference type="HAMAP-Rule" id="MF_00041"/>
    </source>
</evidence>